<dbReference type="EMBL" id="K03204">
    <property type="protein sequence ID" value="AAA60185.1"/>
    <property type="molecule type" value="mRNA"/>
</dbReference>
<dbReference type="EMBL" id="K03205">
    <property type="protein sequence ID" value="AAA60186.1"/>
    <property type="molecule type" value="mRNA"/>
</dbReference>
<dbReference type="EMBL" id="K03206">
    <property type="protein sequence ID" value="AAA60187.1"/>
    <property type="molecule type" value="mRNA"/>
</dbReference>
<dbReference type="EMBL" id="S52986">
    <property type="protein sequence ID" value="AAA13341.2"/>
    <property type="molecule type" value="Genomic_DNA"/>
</dbReference>
<dbReference type="EMBL" id="M97220">
    <property type="protein sequence ID" value="AAB05816.1"/>
    <property type="molecule type" value="Genomic_DNA"/>
</dbReference>
<dbReference type="EMBL" id="K02575">
    <property type="protein sequence ID" value="AAA36502.1"/>
    <property type="molecule type" value="Genomic_DNA"/>
</dbReference>
<dbReference type="EMBL" id="K02576">
    <property type="protein sequence ID" value="AAA36503.1"/>
    <property type="molecule type" value="Genomic_DNA"/>
</dbReference>
<dbReference type="EMBL" id="X07516">
    <property type="protein sequence ID" value="CAA30394.2"/>
    <property type="molecule type" value="Genomic_DNA"/>
</dbReference>
<dbReference type="EMBL" id="X07517">
    <property type="protein sequence ID" value="CAA30395.2"/>
    <property type="molecule type" value="Genomic_DNA"/>
</dbReference>
<dbReference type="EMBL" id="S62928">
    <property type="protein sequence ID" value="AAB27288.2"/>
    <property type="molecule type" value="Genomic_DNA"/>
</dbReference>
<dbReference type="EMBL" id="S62941">
    <property type="protein sequence ID" value="AAB27289.1"/>
    <property type="molecule type" value="Genomic_DNA"/>
</dbReference>
<dbReference type="EMBL" id="AC010176">
    <property type="status" value="NOT_ANNOTATED_CDS"/>
    <property type="molecule type" value="Genomic_DNA"/>
</dbReference>
<dbReference type="EMBL" id="AC078950">
    <property type="status" value="NOT_ANNOTATED_CDS"/>
    <property type="molecule type" value="Genomic_DNA"/>
</dbReference>
<dbReference type="EMBL" id="AC126171">
    <property type="status" value="NOT_ANNOTATED_CDS"/>
    <property type="molecule type" value="Genomic_DNA"/>
</dbReference>
<dbReference type="EMBL" id="CH471094">
    <property type="protein sequence ID" value="EAW96233.1"/>
    <property type="molecule type" value="Genomic_DNA"/>
</dbReference>
<dbReference type="PIR" id="B40750">
    <property type="entry name" value="PIHUB6"/>
</dbReference>
<dbReference type="PIR" id="C38355">
    <property type="entry name" value="C38355"/>
</dbReference>
<dbReference type="PIR" id="D40750">
    <property type="entry name" value="D40750"/>
</dbReference>
<dbReference type="RefSeq" id="NP_005030.2">
    <property type="nucleotide sequence ID" value="NM_005039.3"/>
</dbReference>
<dbReference type="RefSeq" id="NP_955385.1">
    <property type="nucleotide sequence ID" value="NM_199353.2"/>
</dbReference>
<dbReference type="RefSeq" id="NP_955386.1">
    <property type="nucleotide sequence ID" value="NM_199354.2"/>
</dbReference>
<dbReference type="BioGRID" id="111534">
    <property type="interactions" value="20"/>
</dbReference>
<dbReference type="FunCoup" id="P04280">
    <property type="interactions" value="4"/>
</dbReference>
<dbReference type="IntAct" id="P04280">
    <property type="interactions" value="1"/>
</dbReference>
<dbReference type="STRING" id="9606.ENSP00000420826"/>
<dbReference type="GlyCosmos" id="P04280">
    <property type="glycosylation" value="4 sites, No reported glycans"/>
</dbReference>
<dbReference type="GlyGen" id="P04280">
    <property type="glycosylation" value="4 sites"/>
</dbReference>
<dbReference type="iPTMnet" id="P04280"/>
<dbReference type="PhosphoSitePlus" id="P04280"/>
<dbReference type="BioMuta" id="PRB1"/>
<dbReference type="jPOST" id="P04280"/>
<dbReference type="MassIVE" id="P04280"/>
<dbReference type="PaxDb" id="9606-ENSP00000420826"/>
<dbReference type="ProteomicsDB" id="51701"/>
<dbReference type="TopDownProteomics" id="P04280"/>
<dbReference type="DNASU" id="5542"/>
<dbReference type="GeneID" id="5542"/>
<dbReference type="KEGG" id="hsa:5542"/>
<dbReference type="UCSC" id="uc001qzu.2">
    <property type="organism name" value="human"/>
</dbReference>
<dbReference type="AGR" id="HGNC:9337"/>
<dbReference type="CTD" id="5542"/>
<dbReference type="DisGeNET" id="5542"/>
<dbReference type="GeneCards" id="PRB1"/>
<dbReference type="HGNC" id="HGNC:9337">
    <property type="gene designation" value="PRB1"/>
</dbReference>
<dbReference type="MIM" id="180989">
    <property type="type" value="gene"/>
</dbReference>
<dbReference type="neXtProt" id="NX_P04280"/>
<dbReference type="PharmGKB" id="PA33699"/>
<dbReference type="eggNOG" id="ENOG502QS37">
    <property type="taxonomic scope" value="Eukaryota"/>
</dbReference>
<dbReference type="InParanoid" id="P04280"/>
<dbReference type="PAN-GO" id="P04280">
    <property type="GO annotations" value="0 GO annotations based on evolutionary models"/>
</dbReference>
<dbReference type="PathwayCommons" id="P04280"/>
<dbReference type="BioGRID-ORCS" id="5542">
    <property type="hits" value="68 hits in 1025 CRISPR screens"/>
</dbReference>
<dbReference type="ChiTaRS" id="PRB1">
    <property type="organism name" value="human"/>
</dbReference>
<dbReference type="GeneWiki" id="PRB1"/>
<dbReference type="GenomeRNAi" id="5542"/>
<dbReference type="Pharos" id="P04280">
    <property type="development level" value="Tdark"/>
</dbReference>
<dbReference type="PRO" id="PR:P04280"/>
<dbReference type="Proteomes" id="UP000005640">
    <property type="component" value="Unplaced"/>
</dbReference>
<dbReference type="RNAct" id="P04280">
    <property type="molecule type" value="protein"/>
</dbReference>
<dbReference type="GO" id="GO:0005576">
    <property type="term" value="C:extracellular region"/>
    <property type="evidence" value="ECO:0007669"/>
    <property type="project" value="UniProtKB-SubCell"/>
</dbReference>
<dbReference type="InterPro" id="IPR026086">
    <property type="entry name" value="Pro-rich"/>
</dbReference>
<dbReference type="PANTHER" id="PTHR23203:SF20">
    <property type="entry name" value="BASIC SALIVARY PROLINE-RICH PROTEIN 1-RELATED"/>
    <property type="match status" value="1"/>
</dbReference>
<dbReference type="PANTHER" id="PTHR23203">
    <property type="entry name" value="PROLINE-RICH PROTEIN"/>
    <property type="match status" value="1"/>
</dbReference>
<dbReference type="Pfam" id="PF15240">
    <property type="entry name" value="Pro-rich"/>
    <property type="match status" value="2"/>
</dbReference>
<dbReference type="SMART" id="SM01412">
    <property type="entry name" value="Pro-rich"/>
    <property type="match status" value="2"/>
</dbReference>
<comment type="subcellular location">
    <subcellularLocation>
        <location evidence="7">Secreted</location>
    </subcellularLocation>
</comment>
<comment type="PTM">
    <text evidence="4">O-glycosylated. O-glycosylation on Ser-87 is prevalent in head and neck cancer patients. O-Glycosylation on Ser-330 has a 5 times prevalence in head and neck cancers.</text>
</comment>
<comment type="PTM">
    <text evidence="2">Proteolytically cleaved at the tripeptide Xaa-Pro-Gln, where Xaa in the P(3) position is mostly lysine. The endoprotease may be of microbial origin.</text>
</comment>
<comment type="PTM">
    <text evidence="2">Pyroglutamate formation occurs on terminal Gln residues of cleaved peptides. Besides on the N-terminal of mature PBR1, pyroglutamate formation found on at least Gln-58.</text>
</comment>
<comment type="polymorphism">
    <text evidence="5">The number of repeats is polymorphic and varies among different alleles. The sequence shown is that of allele L (long). There are allele M (medium) and allele S (short) which contain 12 and 9 approximate tandem repeats respectively.</text>
</comment>
<organism>
    <name type="scientific">Homo sapiens</name>
    <name type="common">Human</name>
    <dbReference type="NCBI Taxonomy" id="9606"/>
    <lineage>
        <taxon>Eukaryota</taxon>
        <taxon>Metazoa</taxon>
        <taxon>Chordata</taxon>
        <taxon>Craniata</taxon>
        <taxon>Vertebrata</taxon>
        <taxon>Euteleostomi</taxon>
        <taxon>Mammalia</taxon>
        <taxon>Eutheria</taxon>
        <taxon>Euarchontoglires</taxon>
        <taxon>Primates</taxon>
        <taxon>Haplorrhini</taxon>
        <taxon>Catarrhini</taxon>
        <taxon>Hominidae</taxon>
        <taxon>Homo</taxon>
    </lineage>
</organism>
<name>PRP1_HUMAN</name>
<evidence type="ECO:0000256" key="1">
    <source>
        <dbReference type="SAM" id="MobiDB-lite"/>
    </source>
</evidence>
<evidence type="ECO:0000269" key="2">
    <source>
    </source>
</evidence>
<evidence type="ECO:0000269" key="3">
    <source>
    </source>
</evidence>
<evidence type="ECO:0000269" key="4">
    <source>
    </source>
</evidence>
<evidence type="ECO:0000269" key="5">
    <source>
    </source>
</evidence>
<evidence type="ECO:0000269" key="6">
    <source>
    </source>
</evidence>
<evidence type="ECO:0000269" key="7">
    <source>
    </source>
</evidence>
<evidence type="ECO:0000269" key="8">
    <source>
    </source>
</evidence>
<evidence type="ECO:0000269" key="9">
    <source>
    </source>
</evidence>
<evidence type="ECO:0000269" key="10">
    <source>
    </source>
</evidence>
<evidence type="ECO:0000305" key="11"/>
<sequence>MLLILLSVALLALSSAQNLNEDVSQEESPSLIAGNPQGPSPQGGNKPQGPPPPPGKPQGPPPQGGNKPQGPPPPGKPQGPPPQGDKSRSPRSPPGKPQGPPPQGGNQPQGPPPPPGKPQGPPPQGGNKPQGPPPPGKPQGPPPQGDKSQSPRSPPGKPQGPPPQGGNQPQGPPPPPGKPQGPPPQGGNKPQGPPPPGKPQGPPPQGDKSQSPRSPPGKPQGPPPQGGNQPQGPPPPPGKPQGPPQQGGNRPQGPPPPGKPQGPPPQGDKSRSPQSPPGKPQGPPPQGGNQPQGPPPPPGKPQGPPPQGGNKPQGPPPPGKPQGPPAQGGSKSQSARSPPGKPQGPPQQEGNNPQGPPPPAGGNPQQPQAPPAGQPQGPPRPPQGGRPSRPPQ</sequence>
<accession>P04280</accession>
<accession>G5E9X6</accession>
<accession>Q08805</accession>
<accession>Q15186</accession>
<accession>Q15187</accession>
<accession>Q15214</accession>
<accession>Q15215</accession>
<accession>Q16038</accession>
<proteinExistence type="evidence at protein level"/>
<gene>
    <name type="primary">PRB1</name>
</gene>
<keyword id="KW-0903">Direct protein sequencing</keyword>
<keyword id="KW-0325">Glycoprotein</keyword>
<keyword id="KW-0597">Phosphoprotein</keyword>
<keyword id="KW-1267">Proteomics identification</keyword>
<keyword id="KW-0873">Pyrrolidone carboxylic acid</keyword>
<keyword id="KW-1185">Reference proteome</keyword>
<keyword id="KW-0677">Repeat</keyword>
<keyword id="KW-0964">Secreted</keyword>
<keyword id="KW-0732">Signal</keyword>
<reference key="1">
    <citation type="journal article" date="1985" name="J. Biol. Chem.">
        <title>Differential RNA splicing and post-translational cleavages in the human salivary proline-rich protein gene system.</title>
        <authorList>
            <person name="Maeda N."/>
            <person name="Kim H.-S."/>
            <person name="Azen E.A."/>
            <person name="Smithies O."/>
        </authorList>
    </citation>
    <scope>NUCLEOTIDE SEQUENCE [MRNA] (ALLELE M)</scope>
    <scope>VARIANT ALA-337</scope>
</reference>
<reference key="2">
    <citation type="journal article" date="1993" name="Mamm. Genome">
        <title>The structure and evolution of the human salivary proline-rich protein gene family.</title>
        <authorList>
            <person name="Kim H.-S."/>
            <person name="Lyons K.M."/>
            <person name="Saitoh E."/>
            <person name="Azen E.A."/>
            <person name="Smithies O."/>
            <person name="Maeda N."/>
        </authorList>
    </citation>
    <scope>NUCLEOTIDE SEQUENCE [GENOMIC DNA] (ALLELE M)</scope>
    <scope>VARIANT ALA-337</scope>
</reference>
<reference key="3">
    <citation type="journal article" date="1991" name="Biochemistry">
        <title>Basic proline-rich proteins from human parotid saliva: relationships of the covalent structures of ten proteins from a single individual.</title>
        <authorList>
            <person name="Kauffman D.L."/>
            <person name="Bennick A."/>
            <person name="Blum M."/>
            <person name="Keller P.J."/>
        </authorList>
    </citation>
    <scope>PROTEIN SEQUENCE OF 17-91</scope>
    <scope>PYROGLUTAMATE FORMATION AT GLN-17</scope>
    <source>
        <tissue>Saliva</tissue>
    </source>
</reference>
<reference key="4">
    <citation type="journal article" date="1984" name="Proc. Natl. Acad. Sci. U.S.A.">
        <title>Clones from the human gene complex coding for salivary proline-rich proteins.</title>
        <authorList>
            <person name="Azen E.A."/>
            <person name="Lyons K.M."/>
            <person name="McGonigal T."/>
            <person name="Barrett N.L."/>
            <person name="Clements L.S."/>
            <person name="Maeda N."/>
            <person name="Vanin E.F."/>
            <person name="Carlson D.M."/>
            <person name="Smithies O."/>
        </authorList>
    </citation>
    <scope>NUCLEOTIDE SEQUENCE [GENOMIC DNA] OF 18-251 AND 300-392 (ALLELE M)</scope>
    <scope>VARIANT ALA-337</scope>
</reference>
<reference key="5">
    <citation type="journal article" date="1988" name="Genetics">
        <title>Length polymorphisms in human proline-rich protein genes generated by intragenic unequal crossing over.</title>
        <authorList>
            <person name="Lyons K.M."/>
            <person name="Stein J.H."/>
            <person name="Smithies O."/>
        </authorList>
    </citation>
    <scope>NUCLEOTIDE SEQUENCE [GENOMIC DNA] OF 35-392 (ALLELES M AND S)</scope>
    <scope>POLYMORPHISM</scope>
    <scope>VARIANT ALA-337</scope>
</reference>
<reference key="6">
    <citation type="journal article" date="1993" name="Am. J. Hum. Genet.">
        <title>PRBI gene variants coding for length and null polymorphisms among human salivary Ps, PmF, PmS, and Pe proline-rich proteins (PRPs).</title>
        <authorList>
            <person name="Azen E.A."/>
            <person name="Latreille P."/>
            <person name="Niece R.L."/>
        </authorList>
    </citation>
    <scope>NUCLEOTIDE SEQUENCE [GENOMIC DNA] OF 35-392 (ALLELES L AND M)</scope>
    <scope>VARIANT ALA-337</scope>
</reference>
<reference key="7">
    <citation type="journal article" date="2006" name="Nature">
        <title>The finished DNA sequence of human chromosome 12.</title>
        <authorList>
            <person name="Scherer S.E."/>
            <person name="Muzny D.M."/>
            <person name="Buhay C.J."/>
            <person name="Chen R."/>
            <person name="Cree A."/>
            <person name="Ding Y."/>
            <person name="Dugan-Rocha S."/>
            <person name="Gill R."/>
            <person name="Gunaratne P."/>
            <person name="Harris R.A."/>
            <person name="Hawes A.C."/>
            <person name="Hernandez J."/>
            <person name="Hodgson A.V."/>
            <person name="Hume J."/>
            <person name="Jackson A."/>
            <person name="Khan Z.M."/>
            <person name="Kovar-Smith C."/>
            <person name="Lewis L.R."/>
            <person name="Lozado R.J."/>
            <person name="Metzker M.L."/>
            <person name="Milosavljevic A."/>
            <person name="Miner G.R."/>
            <person name="Montgomery K.T."/>
            <person name="Morgan M.B."/>
            <person name="Nazareth L.V."/>
            <person name="Scott G."/>
            <person name="Sodergren E."/>
            <person name="Song X.-Z."/>
            <person name="Steffen D."/>
            <person name="Lovering R.C."/>
            <person name="Wheeler D.A."/>
            <person name="Worley K.C."/>
            <person name="Yuan Y."/>
            <person name="Zhang Z."/>
            <person name="Adams C.Q."/>
            <person name="Ansari-Lari M.A."/>
            <person name="Ayele M."/>
            <person name="Brown M.J."/>
            <person name="Chen G."/>
            <person name="Chen Z."/>
            <person name="Clerc-Blankenburg K.P."/>
            <person name="Davis C."/>
            <person name="Delgado O."/>
            <person name="Dinh H.H."/>
            <person name="Draper H."/>
            <person name="Gonzalez-Garay M.L."/>
            <person name="Havlak P."/>
            <person name="Jackson L.R."/>
            <person name="Jacob L.S."/>
            <person name="Kelly S.H."/>
            <person name="Li L."/>
            <person name="Li Z."/>
            <person name="Liu J."/>
            <person name="Liu W."/>
            <person name="Lu J."/>
            <person name="Maheshwari M."/>
            <person name="Nguyen B.-V."/>
            <person name="Okwuonu G.O."/>
            <person name="Pasternak S."/>
            <person name="Perez L.M."/>
            <person name="Plopper F.J.H."/>
            <person name="Santibanez J."/>
            <person name="Shen H."/>
            <person name="Tabor P.E."/>
            <person name="Verduzco D."/>
            <person name="Waldron L."/>
            <person name="Wang Q."/>
            <person name="Williams G.A."/>
            <person name="Zhang J."/>
            <person name="Zhou J."/>
            <person name="Allen C.C."/>
            <person name="Amin A.G."/>
            <person name="Anyalebechi V."/>
            <person name="Bailey M."/>
            <person name="Barbaria J.A."/>
            <person name="Bimage K.E."/>
            <person name="Bryant N.P."/>
            <person name="Burch P.E."/>
            <person name="Burkett C.E."/>
            <person name="Burrell K.L."/>
            <person name="Calderon E."/>
            <person name="Cardenas V."/>
            <person name="Carter K."/>
            <person name="Casias K."/>
            <person name="Cavazos I."/>
            <person name="Cavazos S.R."/>
            <person name="Ceasar H."/>
            <person name="Chacko J."/>
            <person name="Chan S.N."/>
            <person name="Chavez D."/>
            <person name="Christopoulos C."/>
            <person name="Chu J."/>
            <person name="Cockrell R."/>
            <person name="Cox C.D."/>
            <person name="Dang M."/>
            <person name="Dathorne S.R."/>
            <person name="David R."/>
            <person name="Davis C.M."/>
            <person name="Davy-Carroll L."/>
            <person name="Deshazo D.R."/>
            <person name="Donlin J.E."/>
            <person name="D'Souza L."/>
            <person name="Eaves K.A."/>
            <person name="Egan A."/>
            <person name="Emery-Cohen A.J."/>
            <person name="Escotto M."/>
            <person name="Flagg N."/>
            <person name="Forbes L.D."/>
            <person name="Gabisi A.M."/>
            <person name="Garza M."/>
            <person name="Hamilton C."/>
            <person name="Henderson N."/>
            <person name="Hernandez O."/>
            <person name="Hines S."/>
            <person name="Hogues M.E."/>
            <person name="Huang M."/>
            <person name="Idlebird D.G."/>
            <person name="Johnson R."/>
            <person name="Jolivet A."/>
            <person name="Jones S."/>
            <person name="Kagan R."/>
            <person name="King L.M."/>
            <person name="Leal B."/>
            <person name="Lebow H."/>
            <person name="Lee S."/>
            <person name="LeVan J.M."/>
            <person name="Lewis L.C."/>
            <person name="London P."/>
            <person name="Lorensuhewa L.M."/>
            <person name="Loulseged H."/>
            <person name="Lovett D.A."/>
            <person name="Lucier A."/>
            <person name="Lucier R.L."/>
            <person name="Ma J."/>
            <person name="Madu R.C."/>
            <person name="Mapua P."/>
            <person name="Martindale A.D."/>
            <person name="Martinez E."/>
            <person name="Massey E."/>
            <person name="Mawhiney S."/>
            <person name="Meador M.G."/>
            <person name="Mendez S."/>
            <person name="Mercado C."/>
            <person name="Mercado I.C."/>
            <person name="Merritt C.E."/>
            <person name="Miner Z.L."/>
            <person name="Minja E."/>
            <person name="Mitchell T."/>
            <person name="Mohabbat F."/>
            <person name="Mohabbat K."/>
            <person name="Montgomery B."/>
            <person name="Moore N."/>
            <person name="Morris S."/>
            <person name="Munidasa M."/>
            <person name="Ngo R.N."/>
            <person name="Nguyen N.B."/>
            <person name="Nickerson E."/>
            <person name="Nwaokelemeh O.O."/>
            <person name="Nwokenkwo S."/>
            <person name="Obregon M."/>
            <person name="Oguh M."/>
            <person name="Oragunye N."/>
            <person name="Oviedo R.J."/>
            <person name="Parish B.J."/>
            <person name="Parker D.N."/>
            <person name="Parrish J."/>
            <person name="Parks K.L."/>
            <person name="Paul H.A."/>
            <person name="Payton B.A."/>
            <person name="Perez A."/>
            <person name="Perrin W."/>
            <person name="Pickens A."/>
            <person name="Primus E.L."/>
            <person name="Pu L.-L."/>
            <person name="Puazo M."/>
            <person name="Quiles M.M."/>
            <person name="Quiroz J.B."/>
            <person name="Rabata D."/>
            <person name="Reeves K."/>
            <person name="Ruiz S.J."/>
            <person name="Shao H."/>
            <person name="Sisson I."/>
            <person name="Sonaike T."/>
            <person name="Sorelle R.P."/>
            <person name="Sutton A.E."/>
            <person name="Svatek A.F."/>
            <person name="Svetz L.A."/>
            <person name="Tamerisa K.S."/>
            <person name="Taylor T.R."/>
            <person name="Teague B."/>
            <person name="Thomas N."/>
            <person name="Thorn R.D."/>
            <person name="Trejos Z.Y."/>
            <person name="Trevino B.K."/>
            <person name="Ukegbu O.N."/>
            <person name="Urban J.B."/>
            <person name="Vasquez L.I."/>
            <person name="Vera V.A."/>
            <person name="Villasana D.M."/>
            <person name="Wang L."/>
            <person name="Ward-Moore S."/>
            <person name="Warren J.T."/>
            <person name="Wei X."/>
            <person name="White F."/>
            <person name="Williamson A.L."/>
            <person name="Wleczyk R."/>
            <person name="Wooden H.S."/>
            <person name="Wooden S.H."/>
            <person name="Yen J."/>
            <person name="Yoon L."/>
            <person name="Yoon V."/>
            <person name="Zorrilla S.E."/>
            <person name="Nelson D."/>
            <person name="Kucherlapati R."/>
            <person name="Weinstock G."/>
            <person name="Gibbs R.A."/>
        </authorList>
    </citation>
    <scope>NUCLEOTIDE SEQUENCE [LARGE SCALE GENOMIC DNA]</scope>
</reference>
<reference key="8">
    <citation type="submission" date="2005-06" db="EMBL/GenBank/DDBJ databases">
        <authorList>
            <person name="Mural R.J."/>
            <person name="Istrail S."/>
            <person name="Sutton G.G."/>
            <person name="Florea L."/>
            <person name="Halpern A.L."/>
            <person name="Mobarry C.M."/>
            <person name="Lippert R."/>
            <person name="Walenz B."/>
            <person name="Shatkay H."/>
            <person name="Dew I."/>
            <person name="Miller J.R."/>
            <person name="Flanigan M.J."/>
            <person name="Edwards N.J."/>
            <person name="Bolanos R."/>
            <person name="Fasulo D."/>
            <person name="Halldorsson B.V."/>
            <person name="Hannenhalli S."/>
            <person name="Turner R."/>
            <person name="Yooseph S."/>
            <person name="Lu F."/>
            <person name="Nusskern D.R."/>
            <person name="Shue B.C."/>
            <person name="Zheng X.H."/>
            <person name="Zhong F."/>
            <person name="Delcher A.L."/>
            <person name="Huson D.H."/>
            <person name="Kravitz S.A."/>
            <person name="Mouchard L."/>
            <person name="Reinert K."/>
            <person name="Remington K.A."/>
            <person name="Clark A.G."/>
            <person name="Waterman M.S."/>
            <person name="Eichler E.E."/>
            <person name="Adams M.D."/>
            <person name="Hunkapiller M.W."/>
            <person name="Myers E.W."/>
            <person name="Venter J.C."/>
        </authorList>
    </citation>
    <scope>NUCLEOTIDE SEQUENCE [LARGE SCALE GENOMIC DNA]</scope>
</reference>
<reference key="9">
    <citation type="journal article" date="1986" name="Biochemistry">
        <title>Basic proline-rich proteins from human parotid saliva: complete covalent structures of proteins IB-1 and IB-6.</title>
        <authorList>
            <person name="Kauffman D."/>
            <person name="Hofmann T."/>
            <person name="Bennick A."/>
            <person name="Keller P."/>
        </authorList>
    </citation>
    <scope>PROTEIN SEQUENCE OF 275-392</scope>
    <scope>SUBCELLULAR LOCATION</scope>
    <source>
        <tissue>Saliva</tissue>
    </source>
</reference>
<reference key="10">
    <citation type="journal article" date="1983" name="J. Biochem.">
        <title>Further fractionation of basic proline-rich peptides from human parotid saliva and complete amino acid sequence of basic proline-rich peptide P-H.</title>
        <authorList>
            <person name="Saitoh E."/>
            <person name="Isemura S."/>
            <person name="Sanada K."/>
        </authorList>
    </citation>
    <scope>PROTEIN SEQUENCE OF 337-392</scope>
    <source>
        <tissue>Saliva</tissue>
    </source>
</reference>
<reference key="11">
    <citation type="journal article" date="2008" name="J. Biol. Chem.">
        <title>Identification of Lys-Pro-Gln as a novel cleavage site specificity of saliva-associated proteases.</title>
        <authorList>
            <person name="Helmerhorst E.J."/>
            <person name="Sun X."/>
            <person name="Salih E."/>
            <person name="Oppenheim F.G."/>
        </authorList>
    </citation>
    <scope>PROTEOLYTIC PROCESSING</scope>
    <scope>IDENTIFICATION BY MASS SPECTROMETRY</scope>
</reference>
<reference key="12">
    <citation type="journal article" date="2010" name="Proteomics">
        <title>Finding new posttranslational modifications in salivary proline-rich proteins.</title>
        <authorList>
            <person name="Vitorino R."/>
            <person name="Alves R."/>
            <person name="Barros A."/>
            <person name="Caseiro A."/>
            <person name="Ferreira R."/>
            <person name="Lobo M.C."/>
            <person name="Bastos A."/>
            <person name="Duarte J."/>
            <person name="Carvalho D."/>
            <person name="Santos L.L."/>
            <person name="Amado F.L."/>
        </authorList>
    </citation>
    <scope>GLYCOSYLATION AT SER-40; SER-87 AND SER-150</scope>
    <scope>PHOSPHORYLATION AT SER-40; SER-92 AND SER-150</scope>
    <scope>PYROGLUTAMATE FORMATION AT GLN-17</scope>
    <scope>IDENTIFICATION BY MASS SPECTROMETRY</scope>
    <scope>VARIANTS ALLELE M AND S</scope>
</reference>
<protein>
    <recommendedName>
        <fullName>Basic salivary proline-rich protein 1</fullName>
        <shortName>Salivary proline-rich protein</shortName>
    </recommendedName>
    <component>
        <recommendedName>
            <fullName>Proline-rich peptide II-2</fullName>
        </recommendedName>
    </component>
    <component>
        <recommendedName>
            <fullName>Basic peptide IB-6</fullName>
        </recommendedName>
    </component>
    <component>
        <recommendedName>
            <fullName>Peptide P-H</fullName>
        </recommendedName>
    </component>
</protein>
<feature type="signal peptide" evidence="3">
    <location>
        <begin position="1"/>
        <end position="16"/>
    </location>
</feature>
<feature type="chain" id="PRO_0000022129" description="Basic salivary proline-rich protein 1">
    <location>
        <begin position="17"/>
        <end position="392"/>
    </location>
</feature>
<feature type="chain" id="PRO_0000372441" description="Proline-rich peptide II-2">
    <location>
        <begin position="17"/>
        <end position="91"/>
    </location>
</feature>
<feature type="chain" id="PRO_0000022130" description="Basic peptide IB-6">
    <location>
        <begin position="275"/>
        <end position="392"/>
    </location>
</feature>
<feature type="chain" id="PRO_0000022131" description="Peptide P-H">
    <location>
        <begin position="337"/>
        <end position="392"/>
    </location>
</feature>
<feature type="repeat" description="1">
    <location>
        <begin position="53"/>
        <end position="72"/>
    </location>
</feature>
<feature type="repeat" description="2">
    <location>
        <begin position="73"/>
        <end position="92"/>
    </location>
</feature>
<feature type="repeat" description="3">
    <location>
        <begin position="93"/>
        <end position="112"/>
    </location>
</feature>
<feature type="repeat" description="4">
    <location>
        <begin position="114"/>
        <end position="133"/>
    </location>
</feature>
<feature type="repeat" description="5">
    <location>
        <begin position="134"/>
        <end position="153"/>
    </location>
</feature>
<feature type="repeat" description="6">
    <location>
        <begin position="154"/>
        <end position="173"/>
    </location>
</feature>
<feature type="repeat" description="7">
    <location>
        <begin position="175"/>
        <end position="194"/>
    </location>
</feature>
<feature type="repeat" description="8">
    <location>
        <begin position="195"/>
        <end position="214"/>
    </location>
</feature>
<feature type="repeat" description="9">
    <location>
        <begin position="215"/>
        <end position="234"/>
    </location>
</feature>
<feature type="repeat" description="10">
    <location>
        <begin position="236"/>
        <end position="255"/>
    </location>
</feature>
<feature type="repeat" description="11">
    <location>
        <begin position="256"/>
        <end position="275"/>
    </location>
</feature>
<feature type="repeat" description="12">
    <location>
        <begin position="276"/>
        <end position="295"/>
    </location>
</feature>
<feature type="repeat" description="13">
    <location>
        <begin position="297"/>
        <end position="316"/>
    </location>
</feature>
<feature type="repeat" description="14">
    <location>
        <begin position="317"/>
        <end position="336"/>
    </location>
</feature>
<feature type="repeat" description="15">
    <location>
        <begin position="338"/>
        <end position="357"/>
    </location>
</feature>
<feature type="region of interest" description="Disordered" evidence="1">
    <location>
        <begin position="19"/>
        <end position="392"/>
    </location>
</feature>
<feature type="region of interest" description="15 X 20 AA approximate tandem repeats of P-P-G-K-P-Q-G-P-P-[PAQ]-Q-[GE]-[GD]-[NKS]-[KSQRN]-[PRQS]-[QS] [GPS]-[PQAR]-[PSR]">
    <location>
        <begin position="53"/>
        <end position="357"/>
    </location>
</feature>
<feature type="compositionally biased region" description="Polar residues" evidence="1">
    <location>
        <begin position="19"/>
        <end position="28"/>
    </location>
</feature>
<feature type="compositionally biased region" description="Low complexity" evidence="1">
    <location>
        <begin position="34"/>
        <end position="47"/>
    </location>
</feature>
<feature type="compositionally biased region" description="Pro residues" evidence="1">
    <location>
        <begin position="48"/>
        <end position="83"/>
    </location>
</feature>
<feature type="compositionally biased region" description="Pro residues" evidence="1">
    <location>
        <begin position="91"/>
        <end position="144"/>
    </location>
</feature>
<feature type="compositionally biased region" description="Pro residues" evidence="1">
    <location>
        <begin position="152"/>
        <end position="205"/>
    </location>
</feature>
<feature type="compositionally biased region" description="Pro residues" evidence="1">
    <location>
        <begin position="213"/>
        <end position="243"/>
    </location>
</feature>
<feature type="compositionally biased region" description="Pro residues" evidence="1">
    <location>
        <begin position="252"/>
        <end position="266"/>
    </location>
</feature>
<feature type="compositionally biased region" description="Pro residues" evidence="1">
    <location>
        <begin position="274"/>
        <end position="324"/>
    </location>
</feature>
<feature type="compositionally biased region" description="Low complexity" evidence="1">
    <location>
        <begin position="325"/>
        <end position="334"/>
    </location>
</feature>
<feature type="compositionally biased region" description="Pro residues" evidence="1">
    <location>
        <begin position="354"/>
        <end position="392"/>
    </location>
</feature>
<feature type="modified residue" description="Pyrrolidone carboxylic acid" evidence="3 4">
    <location>
        <position position="17"/>
    </location>
</feature>
<feature type="modified residue" description="Phosphoserine; alternate" evidence="4">
    <location>
        <position position="40"/>
    </location>
</feature>
<feature type="modified residue" description="Phosphoserine" evidence="4">
    <location>
        <position position="92"/>
    </location>
</feature>
<feature type="modified residue" description="Phosphoserine; alternate" evidence="4">
    <location>
        <position position="150"/>
    </location>
</feature>
<feature type="glycosylation site" description="O-linked (Hex) serine; alternate" evidence="4">
    <location>
        <position position="40"/>
    </location>
</feature>
<feature type="glycosylation site" description="O-linked (HexNAc...) serine" evidence="4">
    <location>
        <position position="87"/>
    </location>
</feature>
<feature type="glycosylation site" description="O-linked (Hex) serine; alternate" evidence="4">
    <location>
        <position position="150"/>
    </location>
</feature>
<feature type="glycosylation site" description="O-linked (HexNAc...) serine">
    <location>
        <position position="330"/>
    </location>
</feature>
<feature type="sequence variant" id="VAR_019693" description="In allele M.">
    <location>
        <begin position="93"/>
        <end position="153"/>
    </location>
</feature>
<feature type="sequence variant" id="VAR_005562" evidence="4">
    <location>
        <begin position="106"/>
        <end position="319"/>
    </location>
</feature>
<feature type="sequence variant" id="VAR_005561">
    <location>
        <begin position="106"/>
        <end position="299"/>
    </location>
</feature>
<feature type="sequence variant" id="VAR_019694" description="In allele S.">
    <location>
        <begin position="134"/>
        <end position="255"/>
    </location>
</feature>
<feature type="sequence variant" id="VAR_080188" evidence="5 6 8 9 10">
    <original>S</original>
    <variation>A</variation>
    <location>
        <position position="337"/>
    </location>
</feature>
<feature type="sequence conflict" description="In Ref. 4; AAA36502." evidence="11" ref="4">
    <original>NLNEDVSQEESPSLIA</original>
    <variation>SCVGFYSVFLFSLCPL</variation>
    <location>
        <begin position="18"/>
        <end position="33"/>
    </location>
</feature>
<feature type="sequence conflict" description="In Ref. 4; AAA36502." evidence="11" ref="4">
    <original>S</original>
    <variation>P</variation>
    <location>
        <position position="40"/>
    </location>
</feature>
<feature type="sequence conflict" description="In Ref. 4; AAA36502." evidence="11" ref="4">
    <original>DK</original>
    <variation>GKR</variation>
    <location>
        <begin position="85"/>
        <end position="86"/>
    </location>
</feature>
<feature type="sequence conflict" description="In Ref. 5; CAA30395." evidence="11" ref="5">
    <original>K</original>
    <variation>R</variation>
    <location>
        <position position="128"/>
    </location>
</feature>
<feature type="sequence conflict" description="In Ref. 4; AAA36502." evidence="11" ref="4">
    <original>PG</original>
    <variation>R</variation>
    <location>
        <begin position="216"/>
        <end position="217"/>
    </location>
</feature>
<feature type="sequence conflict" description="In Ref. 6; AAB27288." evidence="11" ref="6">
    <original>R</original>
    <variation>Q</variation>
    <location>
        <position position="271"/>
    </location>
</feature>
<feature type="sequence conflict" description="In Ref. 5; CAA30395." evidence="11" ref="5">
    <original>Q</original>
    <variation>R</variation>
    <location>
        <position position="274"/>
    </location>
</feature>
<feature type="sequence conflict" description="In Ref. 5; CAA30395." evidence="11" ref="5">
    <original>G</original>
    <variation>R</variation>
    <location>
        <position position="278"/>
    </location>
</feature>
<feature type="sequence conflict" description="In Ref. 4; AAA36503." evidence="11" ref="4">
    <original>Q</original>
    <variation>T</variation>
    <location>
        <position position="307"/>
    </location>
</feature>
<feature type="sequence conflict" description="In Ref. 6; AAB27289." evidence="11" ref="6">
    <original>A</original>
    <variation>P</variation>
    <location>
        <position position="326"/>
    </location>
</feature>
<feature type="sequence conflict" description="In Ref. 4; AAA36503." evidence="11" ref="4">
    <original>S</original>
    <variation>C</variation>
    <location>
        <position position="330"/>
    </location>
</feature>
<feature type="sequence conflict" description="In Ref. 4; AAA36503." evidence="11" ref="4">
    <original>GR</original>
    <variation>DK</variation>
    <location>
        <begin position="385"/>
        <end position="386"/>
    </location>
</feature>